<feature type="chain" id="PRO_0000048855" description="ALX homeobox protein 1">
    <location>
        <begin position="1"/>
        <end position="326"/>
    </location>
</feature>
<feature type="DNA-binding region" description="Homeobox" evidence="3">
    <location>
        <begin position="132"/>
        <end position="191"/>
    </location>
</feature>
<feature type="region of interest" description="Transactivation domain" evidence="1">
    <location>
        <begin position="192"/>
        <end position="326"/>
    </location>
</feature>
<feature type="short sequence motif" description="OAR" evidence="4">
    <location>
        <begin position="306"/>
        <end position="319"/>
    </location>
</feature>
<feature type="modified residue" description="Phosphoserine" evidence="12">
    <location>
        <position position="12"/>
    </location>
</feature>
<feature type="modified residue" description="Phosphoserine" evidence="12">
    <location>
        <position position="69"/>
    </location>
</feature>
<feature type="modified residue" description="N6-acetyllysine; by EP300" evidence="2">
    <location>
        <position position="131"/>
    </location>
</feature>
<feature type="modified residue" description="Phosphoserine" evidence="12">
    <location>
        <position position="306"/>
    </location>
</feature>
<feature type="sequence conflict" description="In Ref. 1; AAB08960." evidence="10" ref="1">
    <original>S</original>
    <variation>T</variation>
    <location>
        <position position="125"/>
    </location>
</feature>
<name>ALX1_HUMAN</name>
<gene>
    <name evidence="11" type="primary">ALX1</name>
    <name evidence="9" type="synonym">CART1</name>
</gene>
<organism>
    <name type="scientific">Homo sapiens</name>
    <name type="common">Human</name>
    <dbReference type="NCBI Taxonomy" id="9606"/>
    <lineage>
        <taxon>Eukaryota</taxon>
        <taxon>Metazoa</taxon>
        <taxon>Chordata</taxon>
        <taxon>Craniata</taxon>
        <taxon>Vertebrata</taxon>
        <taxon>Euteleostomi</taxon>
        <taxon>Mammalia</taxon>
        <taxon>Eutheria</taxon>
        <taxon>Euarchontoglires</taxon>
        <taxon>Primates</taxon>
        <taxon>Haplorrhini</taxon>
        <taxon>Catarrhini</taxon>
        <taxon>Hominidae</taxon>
        <taxon>Homo</taxon>
    </lineage>
</organism>
<keyword id="KW-0007">Acetylation</keyword>
<keyword id="KW-0010">Activator</keyword>
<keyword id="KW-0217">Developmental protein</keyword>
<keyword id="KW-0238">DNA-binding</keyword>
<keyword id="KW-0371">Homeobox</keyword>
<keyword id="KW-0539">Nucleus</keyword>
<keyword id="KW-0597">Phosphoprotein</keyword>
<keyword id="KW-1267">Proteomics identification</keyword>
<keyword id="KW-1185">Reference proteome</keyword>
<keyword id="KW-0678">Repressor</keyword>
<keyword id="KW-0804">Transcription</keyword>
<keyword id="KW-0805">Transcription regulation</keyword>
<dbReference type="EMBL" id="U31986">
    <property type="protein sequence ID" value="AAB08960.1"/>
    <property type="molecule type" value="mRNA"/>
</dbReference>
<dbReference type="EMBL" id="AJ558236">
    <property type="protein sequence ID" value="CAD90155.1"/>
    <property type="molecule type" value="Genomic_DNA"/>
</dbReference>
<dbReference type="EMBL" id="AJ558237">
    <property type="protein sequence ID" value="CAD90155.1"/>
    <property type="status" value="JOINED"/>
    <property type="molecule type" value="Genomic_DNA"/>
</dbReference>
<dbReference type="EMBL" id="BC010923">
    <property type="protein sequence ID" value="AAH10923.1"/>
    <property type="molecule type" value="mRNA"/>
</dbReference>
<dbReference type="CCDS" id="CCDS9028.1"/>
<dbReference type="RefSeq" id="NP_008913.2">
    <property type="nucleotide sequence ID" value="NM_006982.3"/>
</dbReference>
<dbReference type="SMR" id="Q15699"/>
<dbReference type="BioGRID" id="113764">
    <property type="interactions" value="21"/>
</dbReference>
<dbReference type="FunCoup" id="Q15699">
    <property type="interactions" value="935"/>
</dbReference>
<dbReference type="IntAct" id="Q15699">
    <property type="interactions" value="20"/>
</dbReference>
<dbReference type="STRING" id="9606.ENSP00000315417"/>
<dbReference type="iPTMnet" id="Q15699"/>
<dbReference type="PhosphoSitePlus" id="Q15699"/>
<dbReference type="BioMuta" id="ALX1"/>
<dbReference type="DMDM" id="90111820"/>
<dbReference type="jPOST" id="Q15699"/>
<dbReference type="MassIVE" id="Q15699"/>
<dbReference type="PaxDb" id="9606-ENSP00000315417"/>
<dbReference type="PeptideAtlas" id="Q15699"/>
<dbReference type="ProteomicsDB" id="60707"/>
<dbReference type="Pumba" id="Q15699"/>
<dbReference type="Antibodypedia" id="891">
    <property type="antibodies" value="164 antibodies from 24 providers"/>
</dbReference>
<dbReference type="DNASU" id="8092"/>
<dbReference type="Ensembl" id="ENST00000316824.4">
    <property type="protein sequence ID" value="ENSP00000315417.3"/>
    <property type="gene ID" value="ENSG00000180318.4"/>
</dbReference>
<dbReference type="GeneID" id="8092"/>
<dbReference type="KEGG" id="hsa:8092"/>
<dbReference type="MANE-Select" id="ENST00000316824.4">
    <property type="protein sequence ID" value="ENSP00000315417.3"/>
    <property type="RefSeq nucleotide sequence ID" value="NM_006982.3"/>
    <property type="RefSeq protein sequence ID" value="NP_008913.2"/>
</dbReference>
<dbReference type="AGR" id="HGNC:1494"/>
<dbReference type="CTD" id="8092"/>
<dbReference type="DisGeNET" id="8092"/>
<dbReference type="GeneCards" id="ALX1"/>
<dbReference type="HGNC" id="HGNC:1494">
    <property type="gene designation" value="ALX1"/>
</dbReference>
<dbReference type="HPA" id="ENSG00000180318">
    <property type="expression patterns" value="Tissue enhanced (epididymis, kidney)"/>
</dbReference>
<dbReference type="MalaCards" id="ALX1"/>
<dbReference type="MIM" id="601527">
    <property type="type" value="gene"/>
</dbReference>
<dbReference type="MIM" id="613456">
    <property type="type" value="phenotype"/>
</dbReference>
<dbReference type="neXtProt" id="NX_Q15699"/>
<dbReference type="OpenTargets" id="ENSG00000180318"/>
<dbReference type="Orphanet" id="306542">
    <property type="disease" value="Frontonasal dysplasia-severe microphthalmia-severe facial clefting syndrome"/>
</dbReference>
<dbReference type="PharmGKB" id="PA162376294"/>
<dbReference type="VEuPathDB" id="HostDB:ENSG00000180318"/>
<dbReference type="eggNOG" id="KOG0490">
    <property type="taxonomic scope" value="Eukaryota"/>
</dbReference>
<dbReference type="GeneTree" id="ENSGT00940000158251"/>
<dbReference type="HOGENOM" id="CLU_047013_0_1_1"/>
<dbReference type="InParanoid" id="Q15699"/>
<dbReference type="OMA" id="SSPCGDQ"/>
<dbReference type="OrthoDB" id="6159439at2759"/>
<dbReference type="PAN-GO" id="Q15699">
    <property type="GO annotations" value="5 GO annotations based on evolutionary models"/>
</dbReference>
<dbReference type="PhylomeDB" id="Q15699"/>
<dbReference type="TreeFam" id="TF350743"/>
<dbReference type="PathwayCommons" id="Q15699"/>
<dbReference type="SignaLink" id="Q15699"/>
<dbReference type="BioGRID-ORCS" id="8092">
    <property type="hits" value="12 hits in 1170 CRISPR screens"/>
</dbReference>
<dbReference type="ChiTaRS" id="ALX1">
    <property type="organism name" value="human"/>
</dbReference>
<dbReference type="GeneWiki" id="ALX1"/>
<dbReference type="GenomeRNAi" id="8092"/>
<dbReference type="Pharos" id="Q15699">
    <property type="development level" value="Tbio"/>
</dbReference>
<dbReference type="PRO" id="PR:Q15699"/>
<dbReference type="Proteomes" id="UP000005640">
    <property type="component" value="Chromosome 12"/>
</dbReference>
<dbReference type="RNAct" id="Q15699">
    <property type="molecule type" value="protein"/>
</dbReference>
<dbReference type="Bgee" id="ENSG00000180318">
    <property type="expression patterns" value="Expressed in primordial germ cell in gonad and 58 other cell types or tissues"/>
</dbReference>
<dbReference type="ExpressionAtlas" id="Q15699">
    <property type="expression patterns" value="baseline and differential"/>
</dbReference>
<dbReference type="GO" id="GO:0000785">
    <property type="term" value="C:chromatin"/>
    <property type="evidence" value="ECO:0000247"/>
    <property type="project" value="NTNU_SB"/>
</dbReference>
<dbReference type="GO" id="GO:0005794">
    <property type="term" value="C:Golgi apparatus"/>
    <property type="evidence" value="ECO:0000314"/>
    <property type="project" value="HPA"/>
</dbReference>
<dbReference type="GO" id="GO:0016604">
    <property type="term" value="C:nuclear body"/>
    <property type="evidence" value="ECO:0000314"/>
    <property type="project" value="HPA"/>
</dbReference>
<dbReference type="GO" id="GO:0005654">
    <property type="term" value="C:nucleoplasm"/>
    <property type="evidence" value="ECO:0000314"/>
    <property type="project" value="HPA"/>
</dbReference>
<dbReference type="GO" id="GO:0005634">
    <property type="term" value="C:nucleus"/>
    <property type="evidence" value="ECO:0000314"/>
    <property type="project" value="UniProtKB"/>
</dbReference>
<dbReference type="GO" id="GO:0005667">
    <property type="term" value="C:transcription regulator complex"/>
    <property type="evidence" value="ECO:0007669"/>
    <property type="project" value="Ensembl"/>
</dbReference>
<dbReference type="GO" id="GO:0001228">
    <property type="term" value="F:DNA-binding transcription activator activity, RNA polymerase II-specific"/>
    <property type="evidence" value="ECO:0000314"/>
    <property type="project" value="NTNU_SB"/>
</dbReference>
<dbReference type="GO" id="GO:0000981">
    <property type="term" value="F:DNA-binding transcription factor activity, RNA polymerase II-specific"/>
    <property type="evidence" value="ECO:0000247"/>
    <property type="project" value="NTNU_SB"/>
</dbReference>
<dbReference type="GO" id="GO:0000977">
    <property type="term" value="F:RNA polymerase II transcription regulatory region sequence-specific DNA binding"/>
    <property type="evidence" value="ECO:0000314"/>
    <property type="project" value="NTNU_SB"/>
</dbReference>
<dbReference type="GO" id="GO:1990837">
    <property type="term" value="F:sequence-specific double-stranded DNA binding"/>
    <property type="evidence" value="ECO:0000314"/>
    <property type="project" value="ARUK-UCL"/>
</dbReference>
<dbReference type="GO" id="GO:0009952">
    <property type="term" value="P:anterior/posterior pattern specification"/>
    <property type="evidence" value="ECO:0007669"/>
    <property type="project" value="Ensembl"/>
</dbReference>
<dbReference type="GO" id="GO:0030326">
    <property type="term" value="P:embryonic limb morphogenesis"/>
    <property type="evidence" value="ECO:0007669"/>
    <property type="project" value="Ensembl"/>
</dbReference>
<dbReference type="GO" id="GO:0048704">
    <property type="term" value="P:embryonic skeletal system morphogenesis"/>
    <property type="evidence" value="ECO:0000318"/>
    <property type="project" value="GO_Central"/>
</dbReference>
<dbReference type="GO" id="GO:0014031">
    <property type="term" value="P:mesenchymal cell development"/>
    <property type="evidence" value="ECO:0007669"/>
    <property type="project" value="Ensembl"/>
</dbReference>
<dbReference type="GO" id="GO:0045892">
    <property type="term" value="P:negative regulation of DNA-templated transcription"/>
    <property type="evidence" value="ECO:0000318"/>
    <property type="project" value="GO_Central"/>
</dbReference>
<dbReference type="GO" id="GO:0000122">
    <property type="term" value="P:negative regulation of transcription by RNA polymerase II"/>
    <property type="evidence" value="ECO:0000314"/>
    <property type="project" value="MGI"/>
</dbReference>
<dbReference type="GO" id="GO:0001843">
    <property type="term" value="P:neural tube closure"/>
    <property type="evidence" value="ECO:0007669"/>
    <property type="project" value="Ensembl"/>
</dbReference>
<dbReference type="GO" id="GO:0045893">
    <property type="term" value="P:positive regulation of DNA-templated transcription"/>
    <property type="evidence" value="ECO:0000314"/>
    <property type="project" value="UniProtKB"/>
</dbReference>
<dbReference type="GO" id="GO:0010718">
    <property type="term" value="P:positive regulation of epithelial to mesenchymal transition"/>
    <property type="evidence" value="ECO:0000315"/>
    <property type="project" value="UniProtKB"/>
</dbReference>
<dbReference type="GO" id="GO:0045944">
    <property type="term" value="P:positive regulation of transcription by RNA polymerase II"/>
    <property type="evidence" value="ECO:0000314"/>
    <property type="project" value="NTNU_SB"/>
</dbReference>
<dbReference type="GO" id="GO:0060021">
    <property type="term" value="P:roof of mouth development"/>
    <property type="evidence" value="ECO:0007669"/>
    <property type="project" value="Ensembl"/>
</dbReference>
<dbReference type="GO" id="GO:0048864">
    <property type="term" value="P:stem cell development"/>
    <property type="evidence" value="ECO:0007669"/>
    <property type="project" value="Ensembl"/>
</dbReference>
<dbReference type="CDD" id="cd00086">
    <property type="entry name" value="homeodomain"/>
    <property type="match status" value="1"/>
</dbReference>
<dbReference type="FunFam" id="1.10.10.60:FF:000093">
    <property type="entry name" value="ALX homeobox protein 1"/>
    <property type="match status" value="1"/>
</dbReference>
<dbReference type="Gene3D" id="1.10.10.60">
    <property type="entry name" value="Homeodomain-like"/>
    <property type="match status" value="1"/>
</dbReference>
<dbReference type="InterPro" id="IPR001356">
    <property type="entry name" value="HD"/>
</dbReference>
<dbReference type="InterPro" id="IPR017970">
    <property type="entry name" value="Homeobox_CS"/>
</dbReference>
<dbReference type="InterPro" id="IPR009057">
    <property type="entry name" value="Homeodomain-like_sf"/>
</dbReference>
<dbReference type="InterPro" id="IPR003654">
    <property type="entry name" value="OAR_dom"/>
</dbReference>
<dbReference type="InterPro" id="IPR050649">
    <property type="entry name" value="Paired_Homeobox_TFs"/>
</dbReference>
<dbReference type="PANTHER" id="PTHR24329:SF359">
    <property type="entry name" value="ALX HOMEOBOX PROTEIN 1"/>
    <property type="match status" value="1"/>
</dbReference>
<dbReference type="PANTHER" id="PTHR24329">
    <property type="entry name" value="HOMEOBOX PROTEIN ARISTALESS"/>
    <property type="match status" value="1"/>
</dbReference>
<dbReference type="Pfam" id="PF00046">
    <property type="entry name" value="Homeodomain"/>
    <property type="match status" value="1"/>
</dbReference>
<dbReference type="Pfam" id="PF03826">
    <property type="entry name" value="OAR"/>
    <property type="match status" value="1"/>
</dbReference>
<dbReference type="SMART" id="SM00389">
    <property type="entry name" value="HOX"/>
    <property type="match status" value="1"/>
</dbReference>
<dbReference type="SUPFAM" id="SSF46689">
    <property type="entry name" value="Homeodomain-like"/>
    <property type="match status" value="1"/>
</dbReference>
<dbReference type="PROSITE" id="PS00027">
    <property type="entry name" value="HOMEOBOX_1"/>
    <property type="match status" value="1"/>
</dbReference>
<dbReference type="PROSITE" id="PS50071">
    <property type="entry name" value="HOMEOBOX_2"/>
    <property type="match status" value="1"/>
</dbReference>
<dbReference type="PROSITE" id="PS50803">
    <property type="entry name" value="OAR"/>
    <property type="match status" value="1"/>
</dbReference>
<accession>Q15699</accession>
<accession>Q546C8</accession>
<accession>Q96FH4</accession>
<protein>
    <recommendedName>
        <fullName evidence="10">ALX homeobox protein 1</fullName>
    </recommendedName>
    <alternativeName>
        <fullName evidence="1">Cartilage homeoprotein 1</fullName>
        <shortName evidence="1">CART-1</shortName>
    </alternativeName>
</protein>
<proteinExistence type="evidence at protein level"/>
<evidence type="ECO:0000250" key="1">
    <source>
        <dbReference type="UniProtKB" id="Q63087"/>
    </source>
</evidence>
<evidence type="ECO:0000250" key="2">
    <source>
        <dbReference type="UniProtKB" id="Q8C8B0"/>
    </source>
</evidence>
<evidence type="ECO:0000255" key="3">
    <source>
        <dbReference type="PROSITE-ProRule" id="PRU00108"/>
    </source>
</evidence>
<evidence type="ECO:0000255" key="4">
    <source>
        <dbReference type="PROSITE-ProRule" id="PRU00138"/>
    </source>
</evidence>
<evidence type="ECO:0000269" key="5">
    <source>
    </source>
</evidence>
<evidence type="ECO:0000269" key="6">
    <source>
    </source>
</evidence>
<evidence type="ECO:0000269" key="7">
    <source>
    </source>
</evidence>
<evidence type="ECO:0000269" key="8">
    <source>
    </source>
</evidence>
<evidence type="ECO:0000303" key="9">
    <source>
    </source>
</evidence>
<evidence type="ECO:0000305" key="10"/>
<evidence type="ECO:0000312" key="11">
    <source>
        <dbReference type="HGNC" id="HGNC:1494"/>
    </source>
</evidence>
<evidence type="ECO:0007744" key="12">
    <source>
    </source>
</evidence>
<comment type="function">
    <text evidence="5 6 7 8">Sequence-specific DNA-binding transcription factor that binds palindromic sequences within promoters and may activate or repress the transcription of a subset of genes (PubMed:8756334, PubMed:9753625). Most probably regulates the expression of genes involved in the development of mesenchyme-derived craniofacial structures. Early on in development, it plays a role in forebrain mesenchyme survival (PubMed:20451171). May also induce epithelial to mesenchymal transition (EMT) through the expression of SNAI1 (PubMed:23288509).</text>
</comment>
<comment type="subunit">
    <text evidence="1 8">Binds DNA as a homodimer; required for transcriptional activation (PubMed:9753625). Interacts (via homeobox domain) with EP300; acetylates ALX1 and stimulates its transcriptional activity.</text>
</comment>
<comment type="interaction">
    <interactant intactId="EBI-750671">
        <id>Q15699</id>
    </interactant>
    <interactant intactId="EBI-2115799">
        <id>P02743</id>
        <label>APCS</label>
    </interactant>
    <organismsDiffer>false</organismsDiffer>
    <experiments>3</experiments>
</comment>
<comment type="interaction">
    <interactant intactId="EBI-750671">
        <id>Q15699</id>
    </interactant>
    <interactant intactId="EBI-10192241">
        <id>O95833</id>
        <label>CLIC3</label>
    </interactant>
    <organismsDiffer>false</organismsDiffer>
    <experiments>3</experiments>
</comment>
<comment type="interaction">
    <interactant intactId="EBI-750671">
        <id>Q15699</id>
    </interactant>
    <interactant intactId="EBI-5280572">
        <id>P29692-2</id>
        <label>EEF1D</label>
    </interactant>
    <organismsDiffer>false</organismsDiffer>
    <experiments>3</experiments>
</comment>
<comment type="interaction">
    <interactant intactId="EBI-750671">
        <id>Q15699</id>
    </interactant>
    <interactant intactId="EBI-12821367">
        <id>P07492</id>
        <label>GRP</label>
    </interactant>
    <organismsDiffer>false</organismsDiffer>
    <experiments>3</experiments>
</comment>
<comment type="interaction">
    <interactant intactId="EBI-750671">
        <id>Q15699</id>
    </interactant>
    <interactant intactId="EBI-747310">
        <id>O94829</id>
        <label>IPO13</label>
    </interactant>
    <organismsDiffer>false</organismsDiffer>
    <experiments>2</experiments>
</comment>
<comment type="interaction">
    <interactant intactId="EBI-750671">
        <id>Q15699</id>
    </interactant>
    <interactant intactId="EBI-399080">
        <id>Q92993</id>
        <label>KAT5</label>
    </interactant>
    <organismsDiffer>false</organismsDiffer>
    <experiments>3</experiments>
</comment>
<comment type="interaction">
    <interactant intactId="EBI-750671">
        <id>Q15699</id>
    </interactant>
    <interactant intactId="EBI-11958132">
        <id>Q9BYR3</id>
        <label>KRTAP4-4</label>
    </interactant>
    <organismsDiffer>false</organismsDiffer>
    <experiments>3</experiments>
</comment>
<comment type="interaction">
    <interactant intactId="EBI-750671">
        <id>Q15699</id>
    </interactant>
    <interactant intactId="EBI-13330637">
        <id>Q8NGH7</id>
        <label>OR52L1</label>
    </interactant>
    <organismsDiffer>false</organismsDiffer>
    <experiments>3</experiments>
</comment>
<comment type="interaction">
    <interactant intactId="EBI-750671">
        <id>Q15699</id>
    </interactant>
    <interactant intactId="EBI-10694433">
        <id>Q8N7B6-2</id>
        <label>PACRGL</label>
    </interactant>
    <organismsDiffer>false</organismsDiffer>
    <experiments>3</experiments>
</comment>
<comment type="interaction">
    <interactant intactId="EBI-750671">
        <id>Q15699</id>
    </interactant>
    <interactant intactId="EBI-413374">
        <id>P10276</id>
        <label>RARA</label>
    </interactant>
    <organismsDiffer>false</organismsDiffer>
    <experiments>3</experiments>
</comment>
<comment type="interaction">
    <interactant intactId="EBI-750671">
        <id>Q15699</id>
    </interactant>
    <interactant intactId="EBI-10964453">
        <id>Q8IUH3-3</id>
        <label>RBM45</label>
    </interactant>
    <organismsDiffer>false</organismsDiffer>
    <experiments>3</experiments>
</comment>
<comment type="interaction">
    <interactant intactId="EBI-750671">
        <id>Q15699</id>
    </interactant>
    <interactant intactId="EBI-13073486">
        <id>Q96N76</id>
        <label>UROC1</label>
    </interactant>
    <organismsDiffer>false</organismsDiffer>
    <experiments>3</experiments>
</comment>
<comment type="interaction">
    <interactant intactId="EBI-750671">
        <id>Q15699</id>
    </interactant>
    <interactant intactId="EBI-12902696">
        <id>Q96RE9-3</id>
        <label>ZNF300</label>
    </interactant>
    <organismsDiffer>false</organismsDiffer>
    <experiments>3</experiments>
</comment>
<comment type="subcellular location">
    <subcellularLocation>
        <location evidence="7 8">Nucleus</location>
    </subcellularLocation>
</comment>
<comment type="tissue specificity">
    <text evidence="7">Cartilage and cervix tissue.</text>
</comment>
<comment type="domain">
    <text evidence="1">The OAR motif may negatively regulate DNA-binding and therefore transcriptional activity. It is found in the C-terminal transactivation domain that stimulates transcription.</text>
</comment>
<comment type="PTM">
    <text evidence="2">Acetylated at Lys-131 by EP300; increases interaction with EP300 and stimulates ALX1 transcriptional activity.</text>
</comment>
<comment type="disease" evidence="5">
    <disease id="DI-02710">
        <name>Frontonasal dysplasia 3</name>
        <acronym>FND3</acronym>
        <description>The term frontonasal dysplasia describes an array of abnormalities affecting the eyes, forehead and nose and linked to midfacial dysraphia. The clinical picture is highly variable. Major findings include true ocular hypertelorism; broadening of the nasal root; median facial cleft affecting the nose and/or upper lip and palate; unilateral or bilateral clefting of the alae nasi; lack of formation of the nasal tip; anterior cranium bifidum occultum; a V-shaped or widow's peak frontal hairline.</description>
        <dbReference type="MIM" id="613456"/>
    </disease>
    <text>The disease is caused by variants affecting the gene represented in this entry.</text>
</comment>
<comment type="similarity">
    <text evidence="10">Belongs to the paired homeobox family.</text>
</comment>
<comment type="online information" name="Protein Spotlight">
    <link uri="https://www.proteinspotlight.org/back_issues/173/"/>
    <text>The makings of a face - Issue 173 of November 2015</text>
</comment>
<sequence length="326" mass="36961">MEFLSEKFALKSPPSKNSDFYMGAGGPLEHVMETLDNESFYSKASAGKCVQAFGPLPRAEHHVRLERTSPCQDSSVNYGITKVEGQPLHTELNRAMDNCNSLRMSPVKGMQEKGELDELGDKCDSNVSSSKKRRHRTTFTSLQLEELEKVFQKTHYPDVYVREQLALRTELTEARVQVWFQNRRAKWRKRERYGQIQQAKSHFAATYDISVLPRTDSYPQIQNNLWAGNASGGSVVTSCMLPRDTSSCMTPYSHSPRTDSSYTGFSNHQNQFSHVPLNNFFTDSLLTGATNGHAFETKPEFERRSSSIAVLRMKAKEHTANISWAM</sequence>
<reference key="1">
    <citation type="journal article" date="1996" name="DNA Cell Biol.">
        <title>Human Cart-1: structural organization, chromosomal localization, and functional analysis of a cartilage-specific homeodomain cDNA.</title>
        <authorList>
            <person name="Gordon D.F."/>
            <person name="Wagner J."/>
            <person name="Atkinson B.L."/>
            <person name="Chiono M."/>
            <person name="Berry R."/>
            <person name="Sikela J."/>
            <person name="Gutierrez-Hartmann A."/>
        </authorList>
    </citation>
    <scope>NUCLEOTIDE SEQUENCE [MRNA]</scope>
    <scope>FUNCTION</scope>
    <scope>SUBCELLULAR LOCATION</scope>
    <scope>TISSUE SPECIFICITY</scope>
</reference>
<reference key="2">
    <citation type="submission" date="2003-05" db="EMBL/GenBank/DDBJ databases">
        <title>SNPs of transcription factor CART1 in cases with neural tube defects.</title>
        <authorList>
            <person name="Felder B."/>
            <person name="Stegmann K."/>
            <person name="Ermert A."/>
            <person name="Koch M.C."/>
        </authorList>
    </citation>
    <scope>NUCLEOTIDE SEQUENCE [GENOMIC DNA]</scope>
</reference>
<reference key="3">
    <citation type="journal article" date="2004" name="Genome Res.">
        <title>The status, quality, and expansion of the NIH full-length cDNA project: the Mammalian Gene Collection (MGC).</title>
        <authorList>
            <consortium name="The MGC Project Team"/>
        </authorList>
    </citation>
    <scope>NUCLEOTIDE SEQUENCE [LARGE SCALE MRNA]</scope>
    <source>
        <tissue>Brain</tissue>
    </source>
</reference>
<reference key="4">
    <citation type="journal article" date="1998" name="Biochem. Biophys. Res. Commun.">
        <title>Human CART1, a paired-class homeodomain protein, activates transcription through palindromic binding sites.</title>
        <authorList>
            <person name="Cai R.L."/>
        </authorList>
    </citation>
    <scope>FUNCTION</scope>
    <scope>SUBUNIT</scope>
    <scope>SUBCELLULAR LOCATION</scope>
</reference>
<reference key="5">
    <citation type="journal article" date="2010" name="Am. J. Hum. Genet.">
        <title>Disruption of ALX1 causes extreme microphthalmia and severe facial clefting: expanding the spectrum of autosomal-recessive ALX-related frontonasal dysplasia.</title>
        <authorList>
            <person name="Uz E."/>
            <person name="Alanay Y."/>
            <person name="Aktas D."/>
            <person name="Vargel I."/>
            <person name="Gucer S."/>
            <person name="Tuncbilek G."/>
            <person name="von Eggeling F."/>
            <person name="Yilmaz E."/>
            <person name="Deren O."/>
            <person name="Posorski N."/>
            <person name="Ozdag H."/>
            <person name="Liehr T."/>
            <person name="Balci S."/>
            <person name="Alikasifoglu M."/>
            <person name="Wollnik B."/>
            <person name="Akarsu N.A."/>
        </authorList>
    </citation>
    <scope>INVOLVEMENT IN FND3</scope>
    <scope>FUNCTION</scope>
</reference>
<reference key="6">
    <citation type="journal article" date="2013" name="Cancer Res.">
        <title>ALX1 induces snail expression to promote epithelial-to-mesenchymal transition and invasion of ovarian cancer cells.</title>
        <authorList>
            <person name="Yuan H."/>
            <person name="Kajiyama H."/>
            <person name="Ito S."/>
            <person name="Yoshikawa N."/>
            <person name="Hyodo T."/>
            <person name="Asano E."/>
            <person name="Hasegawa H."/>
            <person name="Maeda M."/>
            <person name="Shibata K."/>
            <person name="Hamaguchi M."/>
            <person name="Kikkawa F."/>
            <person name="Senga T."/>
        </authorList>
    </citation>
    <scope>FUNCTION</scope>
</reference>
<reference key="7">
    <citation type="journal article" date="2013" name="J. Proteome Res.">
        <title>Toward a comprehensive characterization of a human cancer cell phosphoproteome.</title>
        <authorList>
            <person name="Zhou H."/>
            <person name="Di Palma S."/>
            <person name="Preisinger C."/>
            <person name="Peng M."/>
            <person name="Polat A.N."/>
            <person name="Heck A.J."/>
            <person name="Mohammed S."/>
        </authorList>
    </citation>
    <scope>PHOSPHORYLATION [LARGE SCALE ANALYSIS] AT SER-12; SER-69 AND SER-306</scope>
    <scope>IDENTIFICATION BY MASS SPECTROMETRY [LARGE SCALE ANALYSIS]</scope>
    <source>
        <tissue>Cervix carcinoma</tissue>
    </source>
</reference>